<feature type="chain" id="PRO_0000148799" description="Aspartyl/glutamyl-tRNA(Asn/Gln) amidotransferase subunit B">
    <location>
        <begin position="1"/>
        <end position="499"/>
    </location>
</feature>
<name>GATB_LEIXX</name>
<proteinExistence type="inferred from homology"/>
<organism>
    <name type="scientific">Leifsonia xyli subsp. xyli (strain CTCB07)</name>
    <dbReference type="NCBI Taxonomy" id="281090"/>
    <lineage>
        <taxon>Bacteria</taxon>
        <taxon>Bacillati</taxon>
        <taxon>Actinomycetota</taxon>
        <taxon>Actinomycetes</taxon>
        <taxon>Micrococcales</taxon>
        <taxon>Microbacteriaceae</taxon>
        <taxon>Leifsonia</taxon>
    </lineage>
</organism>
<evidence type="ECO:0000255" key="1">
    <source>
        <dbReference type="HAMAP-Rule" id="MF_00121"/>
    </source>
</evidence>
<gene>
    <name evidence="1" type="primary">gatB</name>
    <name type="ordered locus">Lxx14340</name>
</gene>
<accession>Q6AEE9</accession>
<comment type="function">
    <text evidence="1">Allows the formation of correctly charged Asn-tRNA(Asn) or Gln-tRNA(Gln) through the transamidation of misacylated Asp-tRNA(Asn) or Glu-tRNA(Gln) in organisms which lack either or both of asparaginyl-tRNA or glutaminyl-tRNA synthetases. The reaction takes place in the presence of glutamine and ATP through an activated phospho-Asp-tRNA(Asn) or phospho-Glu-tRNA(Gln).</text>
</comment>
<comment type="catalytic activity">
    <reaction evidence="1">
        <text>L-glutamyl-tRNA(Gln) + L-glutamine + ATP + H2O = L-glutaminyl-tRNA(Gln) + L-glutamate + ADP + phosphate + H(+)</text>
        <dbReference type="Rhea" id="RHEA:17521"/>
        <dbReference type="Rhea" id="RHEA-COMP:9681"/>
        <dbReference type="Rhea" id="RHEA-COMP:9684"/>
        <dbReference type="ChEBI" id="CHEBI:15377"/>
        <dbReference type="ChEBI" id="CHEBI:15378"/>
        <dbReference type="ChEBI" id="CHEBI:29985"/>
        <dbReference type="ChEBI" id="CHEBI:30616"/>
        <dbReference type="ChEBI" id="CHEBI:43474"/>
        <dbReference type="ChEBI" id="CHEBI:58359"/>
        <dbReference type="ChEBI" id="CHEBI:78520"/>
        <dbReference type="ChEBI" id="CHEBI:78521"/>
        <dbReference type="ChEBI" id="CHEBI:456216"/>
    </reaction>
</comment>
<comment type="catalytic activity">
    <reaction evidence="1">
        <text>L-aspartyl-tRNA(Asn) + L-glutamine + ATP + H2O = L-asparaginyl-tRNA(Asn) + L-glutamate + ADP + phosphate + 2 H(+)</text>
        <dbReference type="Rhea" id="RHEA:14513"/>
        <dbReference type="Rhea" id="RHEA-COMP:9674"/>
        <dbReference type="Rhea" id="RHEA-COMP:9677"/>
        <dbReference type="ChEBI" id="CHEBI:15377"/>
        <dbReference type="ChEBI" id="CHEBI:15378"/>
        <dbReference type="ChEBI" id="CHEBI:29985"/>
        <dbReference type="ChEBI" id="CHEBI:30616"/>
        <dbReference type="ChEBI" id="CHEBI:43474"/>
        <dbReference type="ChEBI" id="CHEBI:58359"/>
        <dbReference type="ChEBI" id="CHEBI:78515"/>
        <dbReference type="ChEBI" id="CHEBI:78516"/>
        <dbReference type="ChEBI" id="CHEBI:456216"/>
    </reaction>
</comment>
<comment type="subunit">
    <text evidence="1">Heterotrimer of A, B and C subunits.</text>
</comment>
<comment type="similarity">
    <text evidence="1">Belongs to the GatB/GatE family. GatB subfamily.</text>
</comment>
<reference key="1">
    <citation type="journal article" date="2004" name="Mol. Plant Microbe Interact.">
        <title>The genome sequence of the Gram-positive sugarcane pathogen Leifsonia xyli subsp. xyli.</title>
        <authorList>
            <person name="Monteiro-Vitorello C.B."/>
            <person name="Camargo L.E.A."/>
            <person name="Van Sluys M.A."/>
            <person name="Kitajima J.P."/>
            <person name="Truffi D."/>
            <person name="do Amaral A.M."/>
            <person name="Harakava R."/>
            <person name="de Oliveira J.C.F."/>
            <person name="Wood D."/>
            <person name="de Oliveira M.C."/>
            <person name="Miyaki C.Y."/>
            <person name="Takita M.A."/>
            <person name="da Silva A.C.R."/>
            <person name="Furlan L.R."/>
            <person name="Carraro D.M."/>
            <person name="Camarotte G."/>
            <person name="Almeida N.F. Jr."/>
            <person name="Carrer H."/>
            <person name="Coutinho L.L."/>
            <person name="El-Dorry H.A."/>
            <person name="Ferro M.I.T."/>
            <person name="Gagliardi P.R."/>
            <person name="Giglioti E."/>
            <person name="Goldman M.H.S."/>
            <person name="Goldman G.H."/>
            <person name="Kimura E.T."/>
            <person name="Ferro E.S."/>
            <person name="Kuramae E.E."/>
            <person name="Lemos E.G.M."/>
            <person name="Lemos M.V.F."/>
            <person name="Mauro S.M.Z."/>
            <person name="Machado M.A."/>
            <person name="Marino C.L."/>
            <person name="Menck C.F."/>
            <person name="Nunes L.R."/>
            <person name="Oliveira R.C."/>
            <person name="Pereira G.G."/>
            <person name="Siqueira W."/>
            <person name="de Souza A.A."/>
            <person name="Tsai S.M."/>
            <person name="Zanca A.S."/>
            <person name="Simpson A.J.G."/>
            <person name="Brumbley S.M."/>
            <person name="Setubal J.C."/>
        </authorList>
    </citation>
    <scope>NUCLEOTIDE SEQUENCE [LARGE SCALE GENOMIC DNA]</scope>
    <source>
        <strain>CTCB07</strain>
    </source>
</reference>
<dbReference type="EC" id="6.3.5.-" evidence="1"/>
<dbReference type="EMBL" id="AE016822">
    <property type="protein sequence ID" value="AAT89247.1"/>
    <property type="molecule type" value="Genomic_DNA"/>
</dbReference>
<dbReference type="RefSeq" id="WP_011186239.1">
    <property type="nucleotide sequence ID" value="NC_006087.1"/>
</dbReference>
<dbReference type="SMR" id="Q6AEE9"/>
<dbReference type="STRING" id="281090.Lxx14340"/>
<dbReference type="KEGG" id="lxx:Lxx14340"/>
<dbReference type="eggNOG" id="COG0064">
    <property type="taxonomic scope" value="Bacteria"/>
</dbReference>
<dbReference type="HOGENOM" id="CLU_019240_0_0_11"/>
<dbReference type="Proteomes" id="UP000001306">
    <property type="component" value="Chromosome"/>
</dbReference>
<dbReference type="GO" id="GO:0050566">
    <property type="term" value="F:asparaginyl-tRNA synthase (glutamine-hydrolyzing) activity"/>
    <property type="evidence" value="ECO:0007669"/>
    <property type="project" value="RHEA"/>
</dbReference>
<dbReference type="GO" id="GO:0005524">
    <property type="term" value="F:ATP binding"/>
    <property type="evidence" value="ECO:0007669"/>
    <property type="project" value="UniProtKB-KW"/>
</dbReference>
<dbReference type="GO" id="GO:0050567">
    <property type="term" value="F:glutaminyl-tRNA synthase (glutamine-hydrolyzing) activity"/>
    <property type="evidence" value="ECO:0007669"/>
    <property type="project" value="UniProtKB-UniRule"/>
</dbReference>
<dbReference type="GO" id="GO:0070681">
    <property type="term" value="P:glutaminyl-tRNAGln biosynthesis via transamidation"/>
    <property type="evidence" value="ECO:0007669"/>
    <property type="project" value="TreeGrafter"/>
</dbReference>
<dbReference type="GO" id="GO:0006412">
    <property type="term" value="P:translation"/>
    <property type="evidence" value="ECO:0007669"/>
    <property type="project" value="UniProtKB-UniRule"/>
</dbReference>
<dbReference type="Gene3D" id="1.10.10.410">
    <property type="match status" value="1"/>
</dbReference>
<dbReference type="HAMAP" id="MF_00121">
    <property type="entry name" value="GatB"/>
    <property type="match status" value="1"/>
</dbReference>
<dbReference type="InterPro" id="IPR017959">
    <property type="entry name" value="Asn/Gln-tRNA_amidoTrfase_suB/E"/>
</dbReference>
<dbReference type="InterPro" id="IPR006075">
    <property type="entry name" value="Asn/Gln-tRNA_Trfase_suB/E_cat"/>
</dbReference>
<dbReference type="InterPro" id="IPR018027">
    <property type="entry name" value="Asn/Gln_amidotransferase"/>
</dbReference>
<dbReference type="InterPro" id="IPR003789">
    <property type="entry name" value="Asn/Gln_tRNA_amidoTrase-B-like"/>
</dbReference>
<dbReference type="InterPro" id="IPR004413">
    <property type="entry name" value="GatB"/>
</dbReference>
<dbReference type="InterPro" id="IPR023168">
    <property type="entry name" value="GatB_Yqey_C_2"/>
</dbReference>
<dbReference type="InterPro" id="IPR014746">
    <property type="entry name" value="Gln_synth/guanido_kin_cat_dom"/>
</dbReference>
<dbReference type="NCBIfam" id="TIGR00133">
    <property type="entry name" value="gatB"/>
    <property type="match status" value="1"/>
</dbReference>
<dbReference type="NCBIfam" id="NF004012">
    <property type="entry name" value="PRK05477.1-2"/>
    <property type="match status" value="1"/>
</dbReference>
<dbReference type="NCBIfam" id="NF004013">
    <property type="entry name" value="PRK05477.1-3"/>
    <property type="match status" value="1"/>
</dbReference>
<dbReference type="NCBIfam" id="NF004014">
    <property type="entry name" value="PRK05477.1-4"/>
    <property type="match status" value="1"/>
</dbReference>
<dbReference type="PANTHER" id="PTHR11659">
    <property type="entry name" value="GLUTAMYL-TRNA GLN AMIDOTRANSFERASE SUBUNIT B MITOCHONDRIAL AND PROKARYOTIC PET112-RELATED"/>
    <property type="match status" value="1"/>
</dbReference>
<dbReference type="PANTHER" id="PTHR11659:SF0">
    <property type="entry name" value="GLUTAMYL-TRNA(GLN) AMIDOTRANSFERASE SUBUNIT B, MITOCHONDRIAL"/>
    <property type="match status" value="1"/>
</dbReference>
<dbReference type="Pfam" id="PF02934">
    <property type="entry name" value="GatB_N"/>
    <property type="match status" value="1"/>
</dbReference>
<dbReference type="Pfam" id="PF02637">
    <property type="entry name" value="GatB_Yqey"/>
    <property type="match status" value="1"/>
</dbReference>
<dbReference type="SMART" id="SM00845">
    <property type="entry name" value="GatB_Yqey"/>
    <property type="match status" value="1"/>
</dbReference>
<dbReference type="SUPFAM" id="SSF89095">
    <property type="entry name" value="GatB/YqeY motif"/>
    <property type="match status" value="1"/>
</dbReference>
<dbReference type="SUPFAM" id="SSF55931">
    <property type="entry name" value="Glutamine synthetase/guanido kinase"/>
    <property type="match status" value="1"/>
</dbReference>
<sequence>MAKVDLMEYERALELFEPVLGFEVHVELNTKTKMFCGCANEFGSGANTNTCPTCLGLPGGLPHVNEKAIESSIRLGLALGCDIAESSRFARKNYFYPDLAKNFQTSQYDEPIAHDGRVSIELENGRELTIEIERAHMEEDAGKLTHIGGATGRIQGADHSLVDFNRGGVPLVEIVTKMIEGAETDAPEVGRTYVRAIRDIVKALGVSNARMEEGNVRCDANVSLRRRGSSELGTRTETKNVNSLRSIERAVRYEIQRQAAILEAGGAIVQETRHWHEDTGSTSAGRPKSDADDYRYFPEPDLVPVAPSREWIEELRGTLPEPPAARRKRLTAEWGFTALEFQDVANADLLDELEATIAAGAAPAAARKWWTGEIARVANAQGVAAGTLVAPEHVAELAGLVEAGTLTDRLARQVLEGVIAGEGRPQEVVDARGLAVVSDDGALVAAIDEALAAQPDVLAKIRDGKVQAAGAVIGAVMKAMKGQADAARVRELVLERASQ</sequence>
<protein>
    <recommendedName>
        <fullName evidence="1">Aspartyl/glutamyl-tRNA(Asn/Gln) amidotransferase subunit B</fullName>
        <shortName evidence="1">Asp/Glu-ADT subunit B</shortName>
        <ecNumber evidence="1">6.3.5.-</ecNumber>
    </recommendedName>
</protein>
<keyword id="KW-0067">ATP-binding</keyword>
<keyword id="KW-0436">Ligase</keyword>
<keyword id="KW-0547">Nucleotide-binding</keyword>
<keyword id="KW-0648">Protein biosynthesis</keyword>
<keyword id="KW-1185">Reference proteome</keyword>